<reference key="1">
    <citation type="submission" date="2003-10" db="EMBL/GenBank/DDBJ databases">
        <title>The complete genome sequence of the alkaliphilic Bacillus clausii KSM-K16.</title>
        <authorList>
            <person name="Takaki Y."/>
            <person name="Kageyama Y."/>
            <person name="Shimamura S."/>
            <person name="Suzuki H."/>
            <person name="Nishi S."/>
            <person name="Hatada Y."/>
            <person name="Kawai S."/>
            <person name="Ito S."/>
            <person name="Horikoshi K."/>
        </authorList>
    </citation>
    <scope>NUCLEOTIDE SEQUENCE [LARGE SCALE GENOMIC DNA]</scope>
    <source>
        <strain>KSM-K16</strain>
    </source>
</reference>
<keyword id="KW-0963">Cytoplasm</keyword>
<keyword id="KW-0369">Histidine metabolism</keyword>
<keyword id="KW-0456">Lyase</keyword>
<keyword id="KW-1185">Reference proteome</keyword>
<organism>
    <name type="scientific">Shouchella clausii (strain KSM-K16)</name>
    <name type="common">Alkalihalobacillus clausii</name>
    <dbReference type="NCBI Taxonomy" id="66692"/>
    <lineage>
        <taxon>Bacteria</taxon>
        <taxon>Bacillati</taxon>
        <taxon>Bacillota</taxon>
        <taxon>Bacilli</taxon>
        <taxon>Bacillales</taxon>
        <taxon>Bacillaceae</taxon>
        <taxon>Shouchella</taxon>
    </lineage>
</organism>
<feature type="chain" id="PRO_0000160990" description="Histidine ammonia-lyase">
    <location>
        <begin position="1"/>
        <end position="500"/>
    </location>
</feature>
<feature type="modified residue" description="2,3-didehydroalanine (Ser)" evidence="1">
    <location>
        <position position="142"/>
    </location>
</feature>
<feature type="cross-link" description="5-imidazolinone (Ala-Gly)" evidence="1">
    <location>
        <begin position="141"/>
        <end position="143"/>
    </location>
</feature>
<accession>Q5WAZ6</accession>
<comment type="catalytic activity">
    <reaction evidence="1">
        <text>L-histidine = trans-urocanate + NH4(+)</text>
        <dbReference type="Rhea" id="RHEA:21232"/>
        <dbReference type="ChEBI" id="CHEBI:17771"/>
        <dbReference type="ChEBI" id="CHEBI:28938"/>
        <dbReference type="ChEBI" id="CHEBI:57595"/>
        <dbReference type="EC" id="4.3.1.3"/>
    </reaction>
</comment>
<comment type="pathway">
    <text evidence="1">Amino-acid degradation; L-histidine degradation into L-glutamate; N-formimidoyl-L-glutamate from L-histidine: step 1/3.</text>
</comment>
<comment type="subcellular location">
    <subcellularLocation>
        <location evidence="1">Cytoplasm</location>
    </subcellularLocation>
</comment>
<comment type="PTM">
    <text evidence="1">Contains an active site 4-methylidene-imidazol-5-one (MIO), which is formed autocatalytically by cyclization and dehydration of residues Ala-Ser-Gly.</text>
</comment>
<comment type="similarity">
    <text evidence="1">Belongs to the PAL/histidase family.</text>
</comment>
<sequence length="500" mass="53761">MVILTGRSLTLDDMEAILYKGVKVGLSQSCINEIEASRRAVEKIVQDGRTVYGINTGFGKFSDVQIAAADTEELQRNLILSHACGVGGYFSDEISQAMMVLRANALAKGFSGVRLEVVEMLLELINKDIYPCIPSQGSLGASGDLAPLSHLALVLIGEGEVRYRGECMSTASCFAKLGIQPLTLQAKEGLALINGTQAMTAVGVVAYLEAEKLAYQGEQIAAVTMEGLQGIIDAFDQAVHVARGYQEQIDVAARMRHLLQGSKLTTKQGEKRVQDAYSLRCIPQVHGAVWQALGYVKDKLLIEMNAATDNPLLFDEGEKVISGGNFHGEPIAFAMDFLCIAMAELGNIAERRVERLVNPQLNDLPPFLSPAPGLQSGAMIMQYVAASLVSENKTLAHPASVDSIPSSANQEDHVSMGTIAARHALQIVENVRRICAIEAICALQAVEYRGIAAMAPATKTFFVEARRVVPTITADRVFAKDIEAMAQWLRNGGKAAAVLS</sequence>
<protein>
    <recommendedName>
        <fullName evidence="1">Histidine ammonia-lyase</fullName>
        <shortName evidence="1">Histidase</shortName>
        <ecNumber evidence="1">4.3.1.3</ecNumber>
    </recommendedName>
</protein>
<proteinExistence type="inferred from homology"/>
<dbReference type="EC" id="4.3.1.3" evidence="1"/>
<dbReference type="EMBL" id="AP006627">
    <property type="protein sequence ID" value="BAD66464.1"/>
    <property type="molecule type" value="Genomic_DNA"/>
</dbReference>
<dbReference type="RefSeq" id="WP_011248767.1">
    <property type="nucleotide sequence ID" value="NC_006582.1"/>
</dbReference>
<dbReference type="SMR" id="Q5WAZ6"/>
<dbReference type="STRING" id="66692.ABC3933"/>
<dbReference type="KEGG" id="bcl:ABC3933"/>
<dbReference type="eggNOG" id="COG2986">
    <property type="taxonomic scope" value="Bacteria"/>
</dbReference>
<dbReference type="HOGENOM" id="CLU_014801_4_0_9"/>
<dbReference type="OrthoDB" id="9806955at2"/>
<dbReference type="UniPathway" id="UPA00379">
    <property type="reaction ID" value="UER00549"/>
</dbReference>
<dbReference type="Proteomes" id="UP000001168">
    <property type="component" value="Chromosome"/>
</dbReference>
<dbReference type="GO" id="GO:0005737">
    <property type="term" value="C:cytoplasm"/>
    <property type="evidence" value="ECO:0007669"/>
    <property type="project" value="UniProtKB-SubCell"/>
</dbReference>
<dbReference type="GO" id="GO:0004397">
    <property type="term" value="F:histidine ammonia-lyase activity"/>
    <property type="evidence" value="ECO:0007669"/>
    <property type="project" value="UniProtKB-UniRule"/>
</dbReference>
<dbReference type="GO" id="GO:0019556">
    <property type="term" value="P:L-histidine catabolic process to glutamate and formamide"/>
    <property type="evidence" value="ECO:0007669"/>
    <property type="project" value="UniProtKB-UniPathway"/>
</dbReference>
<dbReference type="GO" id="GO:0019557">
    <property type="term" value="P:L-histidine catabolic process to glutamate and formate"/>
    <property type="evidence" value="ECO:0007669"/>
    <property type="project" value="UniProtKB-UniPathway"/>
</dbReference>
<dbReference type="CDD" id="cd00332">
    <property type="entry name" value="PAL-HAL"/>
    <property type="match status" value="1"/>
</dbReference>
<dbReference type="FunFam" id="1.10.275.10:FF:000005">
    <property type="entry name" value="Histidine ammonia-lyase"/>
    <property type="match status" value="1"/>
</dbReference>
<dbReference type="FunFam" id="1.20.200.10:FF:000003">
    <property type="entry name" value="Histidine ammonia-lyase"/>
    <property type="match status" value="1"/>
</dbReference>
<dbReference type="Gene3D" id="1.20.200.10">
    <property type="entry name" value="Fumarase/aspartase (Central domain)"/>
    <property type="match status" value="1"/>
</dbReference>
<dbReference type="Gene3D" id="1.10.275.10">
    <property type="entry name" value="Fumarase/aspartase (N-terminal domain)"/>
    <property type="match status" value="1"/>
</dbReference>
<dbReference type="HAMAP" id="MF_00229">
    <property type="entry name" value="His_ammonia_lyase"/>
    <property type="match status" value="1"/>
</dbReference>
<dbReference type="InterPro" id="IPR001106">
    <property type="entry name" value="Aromatic_Lyase"/>
</dbReference>
<dbReference type="InterPro" id="IPR024083">
    <property type="entry name" value="Fumarase/histidase_N"/>
</dbReference>
<dbReference type="InterPro" id="IPR005921">
    <property type="entry name" value="HutH"/>
</dbReference>
<dbReference type="InterPro" id="IPR008948">
    <property type="entry name" value="L-Aspartase-like"/>
</dbReference>
<dbReference type="InterPro" id="IPR022313">
    <property type="entry name" value="Phe/His_NH3-lyase_AS"/>
</dbReference>
<dbReference type="NCBIfam" id="TIGR01225">
    <property type="entry name" value="hutH"/>
    <property type="match status" value="1"/>
</dbReference>
<dbReference type="NCBIfam" id="NF006871">
    <property type="entry name" value="PRK09367.1"/>
    <property type="match status" value="1"/>
</dbReference>
<dbReference type="PANTHER" id="PTHR10362">
    <property type="entry name" value="HISTIDINE AMMONIA-LYASE"/>
    <property type="match status" value="1"/>
</dbReference>
<dbReference type="Pfam" id="PF00221">
    <property type="entry name" value="Lyase_aromatic"/>
    <property type="match status" value="1"/>
</dbReference>
<dbReference type="SUPFAM" id="SSF48557">
    <property type="entry name" value="L-aspartase-like"/>
    <property type="match status" value="1"/>
</dbReference>
<dbReference type="PROSITE" id="PS00488">
    <property type="entry name" value="PAL_HISTIDASE"/>
    <property type="match status" value="1"/>
</dbReference>
<gene>
    <name evidence="1" type="primary">hutH</name>
    <name type="ordered locus">ABC3933</name>
</gene>
<evidence type="ECO:0000255" key="1">
    <source>
        <dbReference type="HAMAP-Rule" id="MF_00229"/>
    </source>
</evidence>
<name>HUTH_SHOC1</name>